<sequence length="452" mass="47088">MTTNAPGAVILAAGKGTRMKSRLPKVLHPIAGKPMLGHVLSAVSALGSERPVLVVGPGMDEVATYARGLVSGLTIAVQEKQLGTGDAVRAAAPHIDKKESVVLVVFGDTPLVRAETLADMTRRCEEGSDIVVLGFEAADPTGYGRLILDGNDVVRIVEHKDASEEERKNKLCFGGPMAVRAAHLPALLAKLTNKNAQGEFYMTDFVAHGRAAGLVCSAVFCLEADMQGVNSRADLAAAEATMQQRLRMAAMAGGVTMLDPSSVYLSMDTEFGEDVTVGQNVVFGPGCVIANGVTIKAFSHLEGAHVAEGAEIGPFARIRPGSEIGRKARIGNFVETKKARIEDGAKVNHLSYIGDARVGAGANIGAGTITCNYDGYNKFFTDIGAGAFIGSNSSLVAPVSIGDGAYLGSGSVVTKDVAADALGVARARQFEKPGWAAAFHAKHKDKKKASGE</sequence>
<gene>
    <name evidence="1" type="primary">glmU</name>
    <name type="ordered locus">Plav_3066</name>
</gene>
<organism>
    <name type="scientific">Parvibaculum lavamentivorans (strain DS-1 / DSM 13023 / NCIMB 13966)</name>
    <dbReference type="NCBI Taxonomy" id="402881"/>
    <lineage>
        <taxon>Bacteria</taxon>
        <taxon>Pseudomonadati</taxon>
        <taxon>Pseudomonadota</taxon>
        <taxon>Alphaproteobacteria</taxon>
        <taxon>Hyphomicrobiales</taxon>
        <taxon>Parvibaculaceae</taxon>
        <taxon>Parvibaculum</taxon>
    </lineage>
</organism>
<protein>
    <recommendedName>
        <fullName evidence="1">Bifunctional protein GlmU</fullName>
    </recommendedName>
    <domain>
        <recommendedName>
            <fullName evidence="1">UDP-N-acetylglucosamine pyrophosphorylase</fullName>
            <ecNumber evidence="1">2.7.7.23</ecNumber>
        </recommendedName>
        <alternativeName>
            <fullName evidence="1">N-acetylglucosamine-1-phosphate uridyltransferase</fullName>
        </alternativeName>
    </domain>
    <domain>
        <recommendedName>
            <fullName evidence="1">Glucosamine-1-phosphate N-acetyltransferase</fullName>
            <ecNumber evidence="1">2.3.1.157</ecNumber>
        </recommendedName>
    </domain>
</protein>
<feature type="chain" id="PRO_1000073648" description="Bifunctional protein GlmU">
    <location>
        <begin position="1"/>
        <end position="452"/>
    </location>
</feature>
<feature type="region of interest" description="Pyrophosphorylase" evidence="1">
    <location>
        <begin position="1"/>
        <end position="232"/>
    </location>
</feature>
<feature type="region of interest" description="Linker" evidence="1">
    <location>
        <begin position="233"/>
        <end position="253"/>
    </location>
</feature>
<feature type="region of interest" description="N-acetyltransferase" evidence="1">
    <location>
        <begin position="254"/>
        <end position="452"/>
    </location>
</feature>
<feature type="active site" description="Proton acceptor" evidence="1">
    <location>
        <position position="349"/>
    </location>
</feature>
<feature type="binding site" evidence="1">
    <location>
        <begin position="11"/>
        <end position="14"/>
    </location>
    <ligand>
        <name>UDP-N-acetyl-alpha-D-glucosamine</name>
        <dbReference type="ChEBI" id="CHEBI:57705"/>
    </ligand>
</feature>
<feature type="binding site" evidence="1">
    <location>
        <position position="25"/>
    </location>
    <ligand>
        <name>UDP-N-acetyl-alpha-D-glucosamine</name>
        <dbReference type="ChEBI" id="CHEBI:57705"/>
    </ligand>
</feature>
<feature type="binding site" evidence="1">
    <location>
        <position position="78"/>
    </location>
    <ligand>
        <name>UDP-N-acetyl-alpha-D-glucosamine</name>
        <dbReference type="ChEBI" id="CHEBI:57705"/>
    </ligand>
</feature>
<feature type="binding site" evidence="1">
    <location>
        <begin position="83"/>
        <end position="84"/>
    </location>
    <ligand>
        <name>UDP-N-acetyl-alpha-D-glucosamine</name>
        <dbReference type="ChEBI" id="CHEBI:57705"/>
    </ligand>
</feature>
<feature type="binding site" evidence="1">
    <location>
        <position position="108"/>
    </location>
    <ligand>
        <name>Mg(2+)</name>
        <dbReference type="ChEBI" id="CHEBI:18420"/>
    </ligand>
</feature>
<feature type="binding site" evidence="1">
    <location>
        <position position="144"/>
    </location>
    <ligand>
        <name>UDP-N-acetyl-alpha-D-glucosamine</name>
        <dbReference type="ChEBI" id="CHEBI:57705"/>
    </ligand>
</feature>
<feature type="binding site" evidence="1">
    <location>
        <position position="158"/>
    </location>
    <ligand>
        <name>UDP-N-acetyl-alpha-D-glucosamine</name>
        <dbReference type="ChEBI" id="CHEBI:57705"/>
    </ligand>
</feature>
<feature type="binding site" evidence="1">
    <location>
        <position position="230"/>
    </location>
    <ligand>
        <name>Mg(2+)</name>
        <dbReference type="ChEBI" id="CHEBI:18420"/>
    </ligand>
</feature>
<feature type="binding site" evidence="1">
    <location>
        <position position="230"/>
    </location>
    <ligand>
        <name>UDP-N-acetyl-alpha-D-glucosamine</name>
        <dbReference type="ChEBI" id="CHEBI:57705"/>
    </ligand>
</feature>
<feature type="binding site" evidence="1">
    <location>
        <position position="319"/>
    </location>
    <ligand>
        <name>UDP-N-acetyl-alpha-D-glucosamine</name>
        <dbReference type="ChEBI" id="CHEBI:57705"/>
    </ligand>
</feature>
<feature type="binding site" evidence="1">
    <location>
        <position position="337"/>
    </location>
    <ligand>
        <name>UDP-N-acetyl-alpha-D-glucosamine</name>
        <dbReference type="ChEBI" id="CHEBI:57705"/>
    </ligand>
</feature>
<feature type="binding site" evidence="1">
    <location>
        <position position="352"/>
    </location>
    <ligand>
        <name>UDP-N-acetyl-alpha-D-glucosamine</name>
        <dbReference type="ChEBI" id="CHEBI:57705"/>
    </ligand>
</feature>
<feature type="binding site" evidence="1">
    <location>
        <position position="363"/>
    </location>
    <ligand>
        <name>UDP-N-acetyl-alpha-D-glucosamine</name>
        <dbReference type="ChEBI" id="CHEBI:57705"/>
    </ligand>
</feature>
<feature type="binding site" evidence="1">
    <location>
        <position position="366"/>
    </location>
    <ligand>
        <name>acetyl-CoA</name>
        <dbReference type="ChEBI" id="CHEBI:57288"/>
    </ligand>
</feature>
<feature type="binding site" evidence="1">
    <location>
        <begin position="372"/>
        <end position="373"/>
    </location>
    <ligand>
        <name>acetyl-CoA</name>
        <dbReference type="ChEBI" id="CHEBI:57288"/>
    </ligand>
</feature>
<feature type="binding site" evidence="1">
    <location>
        <position position="391"/>
    </location>
    <ligand>
        <name>acetyl-CoA</name>
        <dbReference type="ChEBI" id="CHEBI:57288"/>
    </ligand>
</feature>
<feature type="binding site" evidence="1">
    <location>
        <position position="409"/>
    </location>
    <ligand>
        <name>acetyl-CoA</name>
        <dbReference type="ChEBI" id="CHEBI:57288"/>
    </ligand>
</feature>
<feature type="binding site" evidence="1">
    <location>
        <position position="426"/>
    </location>
    <ligand>
        <name>acetyl-CoA</name>
        <dbReference type="ChEBI" id="CHEBI:57288"/>
    </ligand>
</feature>
<comment type="function">
    <text evidence="1">Catalyzes the last two sequential reactions in the de novo biosynthetic pathway for UDP-N-acetylglucosamine (UDP-GlcNAc). The C-terminal domain catalyzes the transfer of acetyl group from acetyl coenzyme A to glucosamine-1-phosphate (GlcN-1-P) to produce N-acetylglucosamine-1-phosphate (GlcNAc-1-P), which is converted into UDP-GlcNAc by the transfer of uridine 5-monophosphate (from uridine 5-triphosphate), a reaction catalyzed by the N-terminal domain.</text>
</comment>
<comment type="catalytic activity">
    <reaction evidence="1">
        <text>alpha-D-glucosamine 1-phosphate + acetyl-CoA = N-acetyl-alpha-D-glucosamine 1-phosphate + CoA + H(+)</text>
        <dbReference type="Rhea" id="RHEA:13725"/>
        <dbReference type="ChEBI" id="CHEBI:15378"/>
        <dbReference type="ChEBI" id="CHEBI:57287"/>
        <dbReference type="ChEBI" id="CHEBI:57288"/>
        <dbReference type="ChEBI" id="CHEBI:57776"/>
        <dbReference type="ChEBI" id="CHEBI:58516"/>
        <dbReference type="EC" id="2.3.1.157"/>
    </reaction>
</comment>
<comment type="catalytic activity">
    <reaction evidence="1">
        <text>N-acetyl-alpha-D-glucosamine 1-phosphate + UTP + H(+) = UDP-N-acetyl-alpha-D-glucosamine + diphosphate</text>
        <dbReference type="Rhea" id="RHEA:13509"/>
        <dbReference type="ChEBI" id="CHEBI:15378"/>
        <dbReference type="ChEBI" id="CHEBI:33019"/>
        <dbReference type="ChEBI" id="CHEBI:46398"/>
        <dbReference type="ChEBI" id="CHEBI:57705"/>
        <dbReference type="ChEBI" id="CHEBI:57776"/>
        <dbReference type="EC" id="2.7.7.23"/>
    </reaction>
</comment>
<comment type="cofactor">
    <cofactor evidence="1">
        <name>Mg(2+)</name>
        <dbReference type="ChEBI" id="CHEBI:18420"/>
    </cofactor>
    <text evidence="1">Binds 1 Mg(2+) ion per subunit.</text>
</comment>
<comment type="pathway">
    <text evidence="1">Nucleotide-sugar biosynthesis; UDP-N-acetyl-alpha-D-glucosamine biosynthesis; N-acetyl-alpha-D-glucosamine 1-phosphate from alpha-D-glucosamine 6-phosphate (route II): step 2/2.</text>
</comment>
<comment type="pathway">
    <text evidence="1">Nucleotide-sugar biosynthesis; UDP-N-acetyl-alpha-D-glucosamine biosynthesis; UDP-N-acetyl-alpha-D-glucosamine from N-acetyl-alpha-D-glucosamine 1-phosphate: step 1/1.</text>
</comment>
<comment type="pathway">
    <text evidence="1">Bacterial outer membrane biogenesis; LPS lipid A biosynthesis.</text>
</comment>
<comment type="subunit">
    <text evidence="1">Homotrimer.</text>
</comment>
<comment type="subcellular location">
    <subcellularLocation>
        <location evidence="1">Cytoplasm</location>
    </subcellularLocation>
</comment>
<comment type="similarity">
    <text evidence="1">In the N-terminal section; belongs to the N-acetylglucosamine-1-phosphate uridyltransferase family.</text>
</comment>
<comment type="similarity">
    <text evidence="1">In the C-terminal section; belongs to the transferase hexapeptide repeat family.</text>
</comment>
<accession>A7HXP0</accession>
<dbReference type="EC" id="2.7.7.23" evidence="1"/>
<dbReference type="EC" id="2.3.1.157" evidence="1"/>
<dbReference type="EMBL" id="CP000774">
    <property type="protein sequence ID" value="ABS64673.1"/>
    <property type="molecule type" value="Genomic_DNA"/>
</dbReference>
<dbReference type="RefSeq" id="WP_012111994.1">
    <property type="nucleotide sequence ID" value="NC_009719.1"/>
</dbReference>
<dbReference type="SMR" id="A7HXP0"/>
<dbReference type="STRING" id="402881.Plav_3066"/>
<dbReference type="KEGG" id="pla:Plav_3066"/>
<dbReference type="eggNOG" id="COG1207">
    <property type="taxonomic scope" value="Bacteria"/>
</dbReference>
<dbReference type="HOGENOM" id="CLU_029499_15_2_5"/>
<dbReference type="OrthoDB" id="9775031at2"/>
<dbReference type="UniPathway" id="UPA00113">
    <property type="reaction ID" value="UER00532"/>
</dbReference>
<dbReference type="UniPathway" id="UPA00113">
    <property type="reaction ID" value="UER00533"/>
</dbReference>
<dbReference type="UniPathway" id="UPA00973"/>
<dbReference type="Proteomes" id="UP000006377">
    <property type="component" value="Chromosome"/>
</dbReference>
<dbReference type="GO" id="GO:0005737">
    <property type="term" value="C:cytoplasm"/>
    <property type="evidence" value="ECO:0007669"/>
    <property type="project" value="UniProtKB-SubCell"/>
</dbReference>
<dbReference type="GO" id="GO:0016020">
    <property type="term" value="C:membrane"/>
    <property type="evidence" value="ECO:0007669"/>
    <property type="project" value="GOC"/>
</dbReference>
<dbReference type="GO" id="GO:0019134">
    <property type="term" value="F:glucosamine-1-phosphate N-acetyltransferase activity"/>
    <property type="evidence" value="ECO:0007669"/>
    <property type="project" value="UniProtKB-UniRule"/>
</dbReference>
<dbReference type="GO" id="GO:0000287">
    <property type="term" value="F:magnesium ion binding"/>
    <property type="evidence" value="ECO:0007669"/>
    <property type="project" value="UniProtKB-UniRule"/>
</dbReference>
<dbReference type="GO" id="GO:0003977">
    <property type="term" value="F:UDP-N-acetylglucosamine diphosphorylase activity"/>
    <property type="evidence" value="ECO:0007669"/>
    <property type="project" value="UniProtKB-UniRule"/>
</dbReference>
<dbReference type="GO" id="GO:0000902">
    <property type="term" value="P:cell morphogenesis"/>
    <property type="evidence" value="ECO:0007669"/>
    <property type="project" value="UniProtKB-UniRule"/>
</dbReference>
<dbReference type="GO" id="GO:0071555">
    <property type="term" value="P:cell wall organization"/>
    <property type="evidence" value="ECO:0007669"/>
    <property type="project" value="UniProtKB-KW"/>
</dbReference>
<dbReference type="GO" id="GO:0009245">
    <property type="term" value="P:lipid A biosynthetic process"/>
    <property type="evidence" value="ECO:0007669"/>
    <property type="project" value="UniProtKB-UniRule"/>
</dbReference>
<dbReference type="GO" id="GO:0009252">
    <property type="term" value="P:peptidoglycan biosynthetic process"/>
    <property type="evidence" value="ECO:0007669"/>
    <property type="project" value="UniProtKB-UniRule"/>
</dbReference>
<dbReference type="GO" id="GO:0008360">
    <property type="term" value="P:regulation of cell shape"/>
    <property type="evidence" value="ECO:0007669"/>
    <property type="project" value="UniProtKB-KW"/>
</dbReference>
<dbReference type="GO" id="GO:0006048">
    <property type="term" value="P:UDP-N-acetylglucosamine biosynthetic process"/>
    <property type="evidence" value="ECO:0007669"/>
    <property type="project" value="UniProtKB-UniPathway"/>
</dbReference>
<dbReference type="CDD" id="cd02540">
    <property type="entry name" value="GT2_GlmU_N_bac"/>
    <property type="match status" value="1"/>
</dbReference>
<dbReference type="CDD" id="cd03353">
    <property type="entry name" value="LbH_GlmU_C"/>
    <property type="match status" value="1"/>
</dbReference>
<dbReference type="Gene3D" id="2.160.10.10">
    <property type="entry name" value="Hexapeptide repeat proteins"/>
    <property type="match status" value="1"/>
</dbReference>
<dbReference type="Gene3D" id="3.90.550.10">
    <property type="entry name" value="Spore Coat Polysaccharide Biosynthesis Protein SpsA, Chain A"/>
    <property type="match status" value="1"/>
</dbReference>
<dbReference type="HAMAP" id="MF_01631">
    <property type="entry name" value="GlmU"/>
    <property type="match status" value="1"/>
</dbReference>
<dbReference type="InterPro" id="IPR005882">
    <property type="entry name" value="Bifunctional_GlmU"/>
</dbReference>
<dbReference type="InterPro" id="IPR050065">
    <property type="entry name" value="GlmU-like"/>
</dbReference>
<dbReference type="InterPro" id="IPR038009">
    <property type="entry name" value="GlmU_C_LbH"/>
</dbReference>
<dbReference type="InterPro" id="IPR001451">
    <property type="entry name" value="Hexapep"/>
</dbReference>
<dbReference type="InterPro" id="IPR018357">
    <property type="entry name" value="Hexapep_transf_CS"/>
</dbReference>
<dbReference type="InterPro" id="IPR025877">
    <property type="entry name" value="MobA-like_NTP_Trfase"/>
</dbReference>
<dbReference type="InterPro" id="IPR029044">
    <property type="entry name" value="Nucleotide-diphossugar_trans"/>
</dbReference>
<dbReference type="InterPro" id="IPR011004">
    <property type="entry name" value="Trimer_LpxA-like_sf"/>
</dbReference>
<dbReference type="NCBIfam" id="TIGR01173">
    <property type="entry name" value="glmU"/>
    <property type="match status" value="1"/>
</dbReference>
<dbReference type="NCBIfam" id="NF010933">
    <property type="entry name" value="PRK14353.1"/>
    <property type="match status" value="1"/>
</dbReference>
<dbReference type="PANTHER" id="PTHR43584:SF3">
    <property type="entry name" value="BIFUNCTIONAL PROTEIN GLMU"/>
    <property type="match status" value="1"/>
</dbReference>
<dbReference type="PANTHER" id="PTHR43584">
    <property type="entry name" value="NUCLEOTIDYL TRANSFERASE"/>
    <property type="match status" value="1"/>
</dbReference>
<dbReference type="Pfam" id="PF00132">
    <property type="entry name" value="Hexapep"/>
    <property type="match status" value="1"/>
</dbReference>
<dbReference type="Pfam" id="PF12804">
    <property type="entry name" value="NTP_transf_3"/>
    <property type="match status" value="1"/>
</dbReference>
<dbReference type="SUPFAM" id="SSF53448">
    <property type="entry name" value="Nucleotide-diphospho-sugar transferases"/>
    <property type="match status" value="1"/>
</dbReference>
<dbReference type="SUPFAM" id="SSF51161">
    <property type="entry name" value="Trimeric LpxA-like enzymes"/>
    <property type="match status" value="1"/>
</dbReference>
<dbReference type="PROSITE" id="PS00101">
    <property type="entry name" value="HEXAPEP_TRANSFERASES"/>
    <property type="match status" value="1"/>
</dbReference>
<name>GLMU_PARL1</name>
<reference key="1">
    <citation type="journal article" date="2011" name="Stand. Genomic Sci.">
        <title>Complete genome sequence of Parvibaculum lavamentivorans type strain (DS-1(T)).</title>
        <authorList>
            <person name="Schleheck D."/>
            <person name="Weiss M."/>
            <person name="Pitluck S."/>
            <person name="Bruce D."/>
            <person name="Land M.L."/>
            <person name="Han S."/>
            <person name="Saunders E."/>
            <person name="Tapia R."/>
            <person name="Detter C."/>
            <person name="Brettin T."/>
            <person name="Han J."/>
            <person name="Woyke T."/>
            <person name="Goodwin L."/>
            <person name="Pennacchio L."/>
            <person name="Nolan M."/>
            <person name="Cook A.M."/>
            <person name="Kjelleberg S."/>
            <person name="Thomas T."/>
        </authorList>
    </citation>
    <scope>NUCLEOTIDE SEQUENCE [LARGE SCALE GENOMIC DNA]</scope>
    <source>
        <strain>DS-1 / DSM 13023 / NCIMB 13966</strain>
    </source>
</reference>
<evidence type="ECO:0000255" key="1">
    <source>
        <dbReference type="HAMAP-Rule" id="MF_01631"/>
    </source>
</evidence>
<keyword id="KW-0012">Acyltransferase</keyword>
<keyword id="KW-0133">Cell shape</keyword>
<keyword id="KW-0961">Cell wall biogenesis/degradation</keyword>
<keyword id="KW-0963">Cytoplasm</keyword>
<keyword id="KW-0460">Magnesium</keyword>
<keyword id="KW-0479">Metal-binding</keyword>
<keyword id="KW-0511">Multifunctional enzyme</keyword>
<keyword id="KW-0548">Nucleotidyltransferase</keyword>
<keyword id="KW-0573">Peptidoglycan synthesis</keyword>
<keyword id="KW-1185">Reference proteome</keyword>
<keyword id="KW-0677">Repeat</keyword>
<keyword id="KW-0808">Transferase</keyword>
<proteinExistence type="inferred from homology"/>